<feature type="chain" id="PRO_0000194244" description="Mannose-6-phosphate isomerase">
    <location>
        <begin position="1"/>
        <end position="461"/>
    </location>
</feature>
<feature type="active site" evidence="1">
    <location>
        <position position="310"/>
    </location>
</feature>
<feature type="binding site" evidence="1">
    <location>
        <position position="107"/>
    </location>
    <ligand>
        <name>Zn(2+)</name>
        <dbReference type="ChEBI" id="CHEBI:29105"/>
    </ligand>
</feature>
<feature type="binding site" evidence="1">
    <location>
        <position position="109"/>
    </location>
    <ligand>
        <name>Zn(2+)</name>
        <dbReference type="ChEBI" id="CHEBI:29105"/>
    </ligand>
</feature>
<feature type="binding site" evidence="1">
    <location>
        <position position="134"/>
    </location>
    <ligand>
        <name>Zn(2+)</name>
        <dbReference type="ChEBI" id="CHEBI:29105"/>
    </ligand>
</feature>
<feature type="binding site" evidence="1">
    <location>
        <position position="291"/>
    </location>
    <ligand>
        <name>Zn(2+)</name>
        <dbReference type="ChEBI" id="CHEBI:29105"/>
    </ligand>
</feature>
<feature type="sequence conflict" description="In Ref. 1; AAA33319." evidence="2" ref="1">
    <original>R</original>
    <variation>K</variation>
    <location>
        <position position="19"/>
    </location>
</feature>
<evidence type="ECO:0000250" key="1"/>
<evidence type="ECO:0000305" key="2"/>
<keyword id="KW-0963">Cytoplasm</keyword>
<keyword id="KW-0413">Isomerase</keyword>
<keyword id="KW-0479">Metal-binding</keyword>
<keyword id="KW-1185">Reference proteome</keyword>
<keyword id="KW-0862">Zinc</keyword>
<proteinExistence type="inferred from homology"/>
<reference key="1">
    <citation type="journal article" date="1994" name="Eur. J. Biochem.">
        <title>Purification, cDNA cloning and heterologous expression of human phosphomannose isomerase.</title>
        <authorList>
            <person name="Proudfoot A.E.I."/>
            <person name="Turcatti G."/>
            <person name="Wells T.N.C."/>
            <person name="Payton M.A."/>
            <person name="Smith D.J."/>
        </authorList>
    </citation>
    <scope>NUCLEOTIDE SEQUENCE [GENOMIC DNA]</scope>
</reference>
<reference key="2">
    <citation type="journal article" date="2005" name="Nature">
        <title>Sequencing of Aspergillus nidulans and comparative analysis with A. fumigatus and A. oryzae.</title>
        <authorList>
            <person name="Galagan J.E."/>
            <person name="Calvo S.E."/>
            <person name="Cuomo C."/>
            <person name="Ma L.-J."/>
            <person name="Wortman J.R."/>
            <person name="Batzoglou S."/>
            <person name="Lee S.-I."/>
            <person name="Bastuerkmen M."/>
            <person name="Spevak C.C."/>
            <person name="Clutterbuck J."/>
            <person name="Kapitonov V."/>
            <person name="Jurka J."/>
            <person name="Scazzocchio C."/>
            <person name="Farman M.L."/>
            <person name="Butler J."/>
            <person name="Purcell S."/>
            <person name="Harris S."/>
            <person name="Braus G.H."/>
            <person name="Draht O."/>
            <person name="Busch S."/>
            <person name="D'Enfert C."/>
            <person name="Bouchier C."/>
            <person name="Goldman G.H."/>
            <person name="Bell-Pedersen D."/>
            <person name="Griffiths-Jones S."/>
            <person name="Doonan J.H."/>
            <person name="Yu J."/>
            <person name="Vienken K."/>
            <person name="Pain A."/>
            <person name="Freitag M."/>
            <person name="Selker E.U."/>
            <person name="Archer D.B."/>
            <person name="Penalva M.A."/>
            <person name="Oakley B.R."/>
            <person name="Momany M."/>
            <person name="Tanaka T."/>
            <person name="Kumagai T."/>
            <person name="Asai K."/>
            <person name="Machida M."/>
            <person name="Nierman W.C."/>
            <person name="Denning D.W."/>
            <person name="Caddick M.X."/>
            <person name="Hynes M."/>
            <person name="Paoletti M."/>
            <person name="Fischer R."/>
            <person name="Miller B.L."/>
            <person name="Dyer P.S."/>
            <person name="Sachs M.S."/>
            <person name="Osmani S.A."/>
            <person name="Birren B.W."/>
        </authorList>
    </citation>
    <scope>NUCLEOTIDE SEQUENCE [LARGE SCALE GENOMIC DNA]</scope>
    <source>
        <strain>FGSC A4 / ATCC 38163 / CBS 112.46 / NRRL 194 / M139</strain>
    </source>
</reference>
<reference key="3">
    <citation type="journal article" date="2009" name="Fungal Genet. Biol.">
        <title>The 2008 update of the Aspergillus nidulans genome annotation: a community effort.</title>
        <authorList>
            <person name="Wortman J.R."/>
            <person name="Gilsenan J.M."/>
            <person name="Joardar V."/>
            <person name="Deegan J."/>
            <person name="Clutterbuck J."/>
            <person name="Andersen M.R."/>
            <person name="Archer D."/>
            <person name="Bencina M."/>
            <person name="Braus G."/>
            <person name="Coutinho P."/>
            <person name="von Dohren H."/>
            <person name="Doonan J."/>
            <person name="Driessen A.J."/>
            <person name="Durek P."/>
            <person name="Espeso E."/>
            <person name="Fekete E."/>
            <person name="Flipphi M."/>
            <person name="Estrada C.G."/>
            <person name="Geysens S."/>
            <person name="Goldman G."/>
            <person name="de Groot P.W."/>
            <person name="Hansen K."/>
            <person name="Harris S.D."/>
            <person name="Heinekamp T."/>
            <person name="Helmstaedt K."/>
            <person name="Henrissat B."/>
            <person name="Hofmann G."/>
            <person name="Homan T."/>
            <person name="Horio T."/>
            <person name="Horiuchi H."/>
            <person name="James S."/>
            <person name="Jones M."/>
            <person name="Karaffa L."/>
            <person name="Karanyi Z."/>
            <person name="Kato M."/>
            <person name="Keller N."/>
            <person name="Kelly D.E."/>
            <person name="Kiel J.A."/>
            <person name="Kim J.M."/>
            <person name="van der Klei I.J."/>
            <person name="Klis F.M."/>
            <person name="Kovalchuk A."/>
            <person name="Krasevec N."/>
            <person name="Kubicek C.P."/>
            <person name="Liu B."/>
            <person name="Maccabe A."/>
            <person name="Meyer V."/>
            <person name="Mirabito P."/>
            <person name="Miskei M."/>
            <person name="Mos M."/>
            <person name="Mullins J."/>
            <person name="Nelson D.R."/>
            <person name="Nielsen J."/>
            <person name="Oakley B.R."/>
            <person name="Osmani S.A."/>
            <person name="Pakula T."/>
            <person name="Paszewski A."/>
            <person name="Paulsen I."/>
            <person name="Pilsyk S."/>
            <person name="Pocsi I."/>
            <person name="Punt P.J."/>
            <person name="Ram A.F."/>
            <person name="Ren Q."/>
            <person name="Robellet X."/>
            <person name="Robson G."/>
            <person name="Seiboth B."/>
            <person name="van Solingen P."/>
            <person name="Specht T."/>
            <person name="Sun J."/>
            <person name="Taheri-Talesh N."/>
            <person name="Takeshita N."/>
            <person name="Ussery D."/>
            <person name="vanKuyk P.A."/>
            <person name="Visser H."/>
            <person name="van de Vondervoort P.J."/>
            <person name="de Vries R.P."/>
            <person name="Walton J."/>
            <person name="Xiang X."/>
            <person name="Xiong Y."/>
            <person name="Zeng A.P."/>
            <person name="Brandt B.W."/>
            <person name="Cornell M.J."/>
            <person name="van den Hondel C.A."/>
            <person name="Visser J."/>
            <person name="Oliver S.G."/>
            <person name="Turner G."/>
        </authorList>
    </citation>
    <scope>GENOME REANNOTATION</scope>
    <source>
        <strain>FGSC A4 / ATCC 38163 / CBS 112.46 / NRRL 194 / M139</strain>
    </source>
</reference>
<name>MPI_EMENI</name>
<accession>P29951</accession>
<accession>C8VRS9</accession>
<accession>Q5BFL3</accession>
<dbReference type="EC" id="5.3.1.8"/>
<dbReference type="EMBL" id="M85239">
    <property type="protein sequence ID" value="AAA33319.1"/>
    <property type="molecule type" value="Genomic_DNA"/>
</dbReference>
<dbReference type="EMBL" id="AACD01000010">
    <property type="protein sequence ID" value="EAA65443.1"/>
    <property type="molecule type" value="Genomic_DNA"/>
</dbReference>
<dbReference type="EMBL" id="BN001308">
    <property type="protein sequence ID" value="CBF89025.1"/>
    <property type="molecule type" value="Genomic_DNA"/>
</dbReference>
<dbReference type="PIR" id="A56239">
    <property type="entry name" value="A56239"/>
</dbReference>
<dbReference type="RefSeq" id="XP_658271.1">
    <property type="nucleotide sequence ID" value="XM_653179.1"/>
</dbReference>
<dbReference type="SMR" id="P29951"/>
<dbReference type="FunCoup" id="P29951">
    <property type="interactions" value="838"/>
</dbReference>
<dbReference type="STRING" id="227321.P29951"/>
<dbReference type="EnsemblFungi" id="CBF89025">
    <property type="protein sequence ID" value="CBF89025"/>
    <property type="gene ID" value="ANIA_00667"/>
</dbReference>
<dbReference type="KEGG" id="ani:ANIA_00667"/>
<dbReference type="eggNOG" id="KOG2757">
    <property type="taxonomic scope" value="Eukaryota"/>
</dbReference>
<dbReference type="HOGENOM" id="CLU_026967_0_0_1"/>
<dbReference type="InParanoid" id="P29951"/>
<dbReference type="OMA" id="DIGLFCG"/>
<dbReference type="OrthoDB" id="6605218at2759"/>
<dbReference type="UniPathway" id="UPA00126">
    <property type="reaction ID" value="UER00423"/>
</dbReference>
<dbReference type="Proteomes" id="UP000000560">
    <property type="component" value="Chromosome VIII"/>
</dbReference>
<dbReference type="GO" id="GO:0005829">
    <property type="term" value="C:cytosol"/>
    <property type="evidence" value="ECO:0000318"/>
    <property type="project" value="GO_Central"/>
</dbReference>
<dbReference type="GO" id="GO:0004476">
    <property type="term" value="F:mannose-6-phosphate isomerase activity"/>
    <property type="evidence" value="ECO:0000318"/>
    <property type="project" value="GO_Central"/>
</dbReference>
<dbReference type="GO" id="GO:0008270">
    <property type="term" value="F:zinc ion binding"/>
    <property type="evidence" value="ECO:0007669"/>
    <property type="project" value="InterPro"/>
</dbReference>
<dbReference type="GO" id="GO:0005975">
    <property type="term" value="P:carbohydrate metabolic process"/>
    <property type="evidence" value="ECO:0007669"/>
    <property type="project" value="InterPro"/>
</dbReference>
<dbReference type="GO" id="GO:0000032">
    <property type="term" value="P:cell wall mannoprotein biosynthetic process"/>
    <property type="evidence" value="ECO:0007669"/>
    <property type="project" value="EnsemblFungi"/>
</dbReference>
<dbReference type="GO" id="GO:0009298">
    <property type="term" value="P:GDP-mannose biosynthetic process"/>
    <property type="evidence" value="ECO:0000318"/>
    <property type="project" value="GO_Central"/>
</dbReference>
<dbReference type="GO" id="GO:0006486">
    <property type="term" value="P:protein glycosylation"/>
    <property type="evidence" value="ECO:0007669"/>
    <property type="project" value="EnsemblFungi"/>
</dbReference>
<dbReference type="CDD" id="cd07011">
    <property type="entry name" value="cupin_PMI_type_I_N"/>
    <property type="match status" value="1"/>
</dbReference>
<dbReference type="FunFam" id="1.10.441.10:FF:000001">
    <property type="entry name" value="Mannose-6-phosphate isomerase"/>
    <property type="match status" value="1"/>
</dbReference>
<dbReference type="Gene3D" id="2.60.120.10">
    <property type="entry name" value="Jelly Rolls"/>
    <property type="match status" value="2"/>
</dbReference>
<dbReference type="Gene3D" id="1.10.441.10">
    <property type="entry name" value="Phosphomannose Isomerase, domain 2"/>
    <property type="match status" value="1"/>
</dbReference>
<dbReference type="InterPro" id="IPR001250">
    <property type="entry name" value="Man6P_Isoase-1"/>
</dbReference>
<dbReference type="InterPro" id="IPR016305">
    <property type="entry name" value="Mannose-6-P_Isomerase"/>
</dbReference>
<dbReference type="InterPro" id="IPR018050">
    <property type="entry name" value="Pmannose_isomerase-type1_CS"/>
</dbReference>
<dbReference type="InterPro" id="IPR046456">
    <property type="entry name" value="PMI_typeI_C"/>
</dbReference>
<dbReference type="InterPro" id="IPR046457">
    <property type="entry name" value="PMI_typeI_cat"/>
</dbReference>
<dbReference type="InterPro" id="IPR046458">
    <property type="entry name" value="PMI_typeI_hel"/>
</dbReference>
<dbReference type="InterPro" id="IPR014710">
    <property type="entry name" value="RmlC-like_jellyroll"/>
</dbReference>
<dbReference type="InterPro" id="IPR011051">
    <property type="entry name" value="RmlC_Cupin_sf"/>
</dbReference>
<dbReference type="NCBIfam" id="TIGR00218">
    <property type="entry name" value="manA"/>
    <property type="match status" value="1"/>
</dbReference>
<dbReference type="PANTHER" id="PTHR10309">
    <property type="entry name" value="MANNOSE-6-PHOSPHATE ISOMERASE"/>
    <property type="match status" value="1"/>
</dbReference>
<dbReference type="PANTHER" id="PTHR10309:SF0">
    <property type="entry name" value="MANNOSE-6-PHOSPHATE ISOMERASE"/>
    <property type="match status" value="1"/>
</dbReference>
<dbReference type="Pfam" id="PF01238">
    <property type="entry name" value="PMI_typeI_C"/>
    <property type="match status" value="1"/>
</dbReference>
<dbReference type="Pfam" id="PF20511">
    <property type="entry name" value="PMI_typeI_cat"/>
    <property type="match status" value="1"/>
</dbReference>
<dbReference type="Pfam" id="PF20512">
    <property type="entry name" value="PMI_typeI_hel"/>
    <property type="match status" value="1"/>
</dbReference>
<dbReference type="PIRSF" id="PIRSF001480">
    <property type="entry name" value="Mannose-6-phosphate_isomerase"/>
    <property type="match status" value="1"/>
</dbReference>
<dbReference type="PRINTS" id="PR00714">
    <property type="entry name" value="MAN6PISMRASE"/>
</dbReference>
<dbReference type="SUPFAM" id="SSF51182">
    <property type="entry name" value="RmlC-like cupins"/>
    <property type="match status" value="1"/>
</dbReference>
<dbReference type="PROSITE" id="PS00965">
    <property type="entry name" value="PMI_I_1"/>
    <property type="match status" value="1"/>
</dbReference>
<dbReference type="PROSITE" id="PS00966">
    <property type="entry name" value="PMI_I_2"/>
    <property type="match status" value="1"/>
</dbReference>
<gene>
    <name type="primary">manA</name>
    <name type="ORF">AN0667</name>
</gene>
<comment type="function">
    <text>Involved in the synthesis of the GDP-mannose and dolichol-phosphate-mannose required for a number of critical mannosyl transfer reactions.</text>
</comment>
<comment type="catalytic activity">
    <reaction>
        <text>D-mannose 6-phosphate = D-fructose 6-phosphate</text>
        <dbReference type="Rhea" id="RHEA:12356"/>
        <dbReference type="ChEBI" id="CHEBI:58735"/>
        <dbReference type="ChEBI" id="CHEBI:61527"/>
        <dbReference type="EC" id="5.3.1.8"/>
    </reaction>
</comment>
<comment type="cofactor">
    <cofactor evidence="1">
        <name>Zn(2+)</name>
        <dbReference type="ChEBI" id="CHEBI:29105"/>
    </cofactor>
    <text evidence="1">Binds 1 zinc ion per subunit.</text>
</comment>
<comment type="pathway">
    <text>Nucleotide-sugar biosynthesis; GDP-alpha-D-mannose biosynthesis; alpha-D-mannose 1-phosphate from D-fructose 6-phosphate: step 1/2.</text>
</comment>
<comment type="subcellular location">
    <subcellularLocation>
        <location evidence="2">Cytoplasm</location>
    </subcellularLocation>
</comment>
<comment type="similarity">
    <text evidence="2">Belongs to the mannose-6-phosphate isomerase type 1 family.</text>
</comment>
<protein>
    <recommendedName>
        <fullName>Mannose-6-phosphate isomerase</fullName>
        <ecNumber>5.3.1.8</ecNumber>
    </recommendedName>
    <alternativeName>
        <fullName>Phosphohexomutase</fullName>
    </alternativeName>
    <alternativeName>
        <fullName>Phosphomannose isomerase</fullName>
        <shortName>PMI</shortName>
    </alternativeName>
</protein>
<sequence>MQVPLLRLQCGVNSYDWGRVGPESAAAKYAAATAPSDFTIEADKPYAELWMGTHPSLPSKDVETQRTLLDMVQDNLALMSPEVSERYGGKLPFLFKVLSIRKALSIQAHPNKKLAEALHARDPRNYPDDNHKPEMTIAITPFEGLCGFRPLAEIVHFLKAVAPLRYLIGVQTATDFENAVRGFENTEDPEQTKKNKVALRTLFTSLMQSASENIEQAARELVAAAQSSPETFASLVNAPDTNPTNAAELASIIIRLNEQFPNDIGLFVFFFLNFVRLEPGEAMFLKADDIHAYISGDIIECMASSDNVVRAGFTPKFKDVDTLTEMLTYSYAPIDEQKLQPTDYPYTVLNAAAYSSASDSLLYDPPIEEFSVVKTSLRRTGAKATFDPLTGPSILICTGGTGKISVGHKTEEVKEGYVFFVGANAECIIENTGTGSDEENVFTTFKAFCDLTGKEDMANGH</sequence>
<organism>
    <name type="scientific">Emericella nidulans (strain FGSC A4 / ATCC 38163 / CBS 112.46 / NRRL 194 / M139)</name>
    <name type="common">Aspergillus nidulans</name>
    <dbReference type="NCBI Taxonomy" id="227321"/>
    <lineage>
        <taxon>Eukaryota</taxon>
        <taxon>Fungi</taxon>
        <taxon>Dikarya</taxon>
        <taxon>Ascomycota</taxon>
        <taxon>Pezizomycotina</taxon>
        <taxon>Eurotiomycetes</taxon>
        <taxon>Eurotiomycetidae</taxon>
        <taxon>Eurotiales</taxon>
        <taxon>Aspergillaceae</taxon>
        <taxon>Aspergillus</taxon>
        <taxon>Aspergillus subgen. Nidulantes</taxon>
    </lineage>
</organism>